<keyword id="KW-0227">DNA damage</keyword>
<keyword id="KW-0234">DNA repair</keyword>
<keyword id="KW-0238">DNA-binding</keyword>
<keyword id="KW-0326">Glycosidase</keyword>
<keyword id="KW-0378">Hydrolase</keyword>
<keyword id="KW-0456">Lyase</keyword>
<keyword id="KW-0479">Metal-binding</keyword>
<keyword id="KW-0511">Multifunctional enzyme</keyword>
<keyword id="KW-1185">Reference proteome</keyword>
<keyword id="KW-0862">Zinc</keyword>
<keyword id="KW-0863">Zinc-finger</keyword>
<organism>
    <name type="scientific">Magnetococcus marinus (strain ATCC BAA-1437 / JCM 17883 / MC-1)</name>
    <dbReference type="NCBI Taxonomy" id="156889"/>
    <lineage>
        <taxon>Bacteria</taxon>
        <taxon>Pseudomonadati</taxon>
        <taxon>Pseudomonadota</taxon>
        <taxon>Alphaproteobacteria</taxon>
        <taxon>Magnetococcales</taxon>
        <taxon>Magnetococcaceae</taxon>
        <taxon>Magnetococcus</taxon>
    </lineage>
</organism>
<gene>
    <name evidence="2" type="primary">mutM</name>
    <name evidence="2" type="synonym">fpg</name>
    <name type="ordered locus">Mmc1_1621</name>
</gene>
<reference key="1">
    <citation type="journal article" date="2009" name="Appl. Environ. Microbiol.">
        <title>Complete genome sequence of the chemolithoautotrophic marine magnetotactic coccus strain MC-1.</title>
        <authorList>
            <person name="Schubbe S."/>
            <person name="Williams T.J."/>
            <person name="Xie G."/>
            <person name="Kiss H.E."/>
            <person name="Brettin T.S."/>
            <person name="Martinez D."/>
            <person name="Ross C.A."/>
            <person name="Schuler D."/>
            <person name="Cox B.L."/>
            <person name="Nealson K.H."/>
            <person name="Bazylinski D.A."/>
        </authorList>
    </citation>
    <scope>NUCLEOTIDE SEQUENCE [LARGE SCALE GENOMIC DNA]</scope>
    <source>
        <strain>ATCC BAA-1437 / JCM 17883 / MC-1</strain>
    </source>
</reference>
<protein>
    <recommendedName>
        <fullName evidence="2">Formamidopyrimidine-DNA glycosylase</fullName>
        <shortName evidence="2">Fapy-DNA glycosylase</shortName>
        <ecNumber evidence="2">3.2.2.23</ecNumber>
    </recommendedName>
    <alternativeName>
        <fullName evidence="2">DNA-(apurinic or apyrimidinic site) lyase MutM</fullName>
        <shortName evidence="2">AP lyase MutM</shortName>
        <ecNumber evidence="2">4.2.99.18</ecNumber>
    </alternativeName>
</protein>
<accession>A0L837</accession>
<comment type="function">
    <text evidence="2">Involved in base excision repair of DNA damaged by oxidation or by mutagenic agents. Acts as a DNA glycosylase that recognizes and removes damaged bases. Has a preference for oxidized purines, such as 7,8-dihydro-8-oxoguanine (8-oxoG). Has AP (apurinic/apyrimidinic) lyase activity and introduces nicks in the DNA strand. Cleaves the DNA backbone by beta-delta elimination to generate a single-strand break at the site of the removed base with both 3'- and 5'-phosphates.</text>
</comment>
<comment type="catalytic activity">
    <reaction evidence="2">
        <text>Hydrolysis of DNA containing ring-opened 7-methylguanine residues, releasing 2,6-diamino-4-hydroxy-5-(N-methyl)formamidopyrimidine.</text>
        <dbReference type="EC" id="3.2.2.23"/>
    </reaction>
</comment>
<comment type="catalytic activity">
    <reaction evidence="2">
        <text>2'-deoxyribonucleotide-(2'-deoxyribose 5'-phosphate)-2'-deoxyribonucleotide-DNA = a 3'-end 2'-deoxyribonucleotide-(2,3-dehydro-2,3-deoxyribose 5'-phosphate)-DNA + a 5'-end 5'-phospho-2'-deoxyribonucleoside-DNA + H(+)</text>
        <dbReference type="Rhea" id="RHEA:66592"/>
        <dbReference type="Rhea" id="RHEA-COMP:13180"/>
        <dbReference type="Rhea" id="RHEA-COMP:16897"/>
        <dbReference type="Rhea" id="RHEA-COMP:17067"/>
        <dbReference type="ChEBI" id="CHEBI:15378"/>
        <dbReference type="ChEBI" id="CHEBI:136412"/>
        <dbReference type="ChEBI" id="CHEBI:157695"/>
        <dbReference type="ChEBI" id="CHEBI:167181"/>
        <dbReference type="EC" id="4.2.99.18"/>
    </reaction>
</comment>
<comment type="cofactor">
    <cofactor evidence="2">
        <name>Zn(2+)</name>
        <dbReference type="ChEBI" id="CHEBI:29105"/>
    </cofactor>
    <text evidence="2">Binds 1 zinc ion per subunit.</text>
</comment>
<comment type="subunit">
    <text evidence="2">Monomer.</text>
</comment>
<comment type="similarity">
    <text evidence="2">Belongs to the FPG family.</text>
</comment>
<feature type="initiator methionine" description="Removed" evidence="1">
    <location>
        <position position="1"/>
    </location>
</feature>
<feature type="chain" id="PRO_1000008712" description="Formamidopyrimidine-DNA glycosylase">
    <location>
        <begin position="2"/>
        <end position="275"/>
    </location>
</feature>
<feature type="zinc finger region" description="FPG-type" evidence="2">
    <location>
        <begin position="240"/>
        <end position="274"/>
    </location>
</feature>
<feature type="active site" description="Schiff-base intermediate with DNA" evidence="2">
    <location>
        <position position="2"/>
    </location>
</feature>
<feature type="active site" description="Proton donor" evidence="2">
    <location>
        <position position="3"/>
    </location>
</feature>
<feature type="active site" description="Proton donor; for beta-elimination activity" evidence="2">
    <location>
        <position position="59"/>
    </location>
</feature>
<feature type="active site" description="Proton donor; for delta-elimination activity" evidence="2">
    <location>
        <position position="264"/>
    </location>
</feature>
<feature type="binding site" evidence="2">
    <location>
        <position position="92"/>
    </location>
    <ligand>
        <name>DNA</name>
        <dbReference type="ChEBI" id="CHEBI:16991"/>
    </ligand>
</feature>
<feature type="binding site" evidence="2">
    <location>
        <position position="111"/>
    </location>
    <ligand>
        <name>DNA</name>
        <dbReference type="ChEBI" id="CHEBI:16991"/>
    </ligand>
</feature>
<feature type="binding site" evidence="2">
    <location>
        <position position="155"/>
    </location>
    <ligand>
        <name>DNA</name>
        <dbReference type="ChEBI" id="CHEBI:16991"/>
    </ligand>
</feature>
<proteinExistence type="inferred from homology"/>
<name>FPG_MAGMM</name>
<dbReference type="EC" id="3.2.2.23" evidence="2"/>
<dbReference type="EC" id="4.2.99.18" evidence="2"/>
<dbReference type="EMBL" id="CP000471">
    <property type="protein sequence ID" value="ABK44130.1"/>
    <property type="molecule type" value="Genomic_DNA"/>
</dbReference>
<dbReference type="RefSeq" id="WP_011713278.1">
    <property type="nucleotide sequence ID" value="NC_008576.1"/>
</dbReference>
<dbReference type="SMR" id="A0L837"/>
<dbReference type="STRING" id="156889.Mmc1_1621"/>
<dbReference type="KEGG" id="mgm:Mmc1_1621"/>
<dbReference type="eggNOG" id="COG0266">
    <property type="taxonomic scope" value="Bacteria"/>
</dbReference>
<dbReference type="HOGENOM" id="CLU_038423_1_1_5"/>
<dbReference type="OrthoDB" id="9800855at2"/>
<dbReference type="Proteomes" id="UP000002586">
    <property type="component" value="Chromosome"/>
</dbReference>
<dbReference type="GO" id="GO:0034039">
    <property type="term" value="F:8-oxo-7,8-dihydroguanine DNA N-glycosylase activity"/>
    <property type="evidence" value="ECO:0007669"/>
    <property type="project" value="TreeGrafter"/>
</dbReference>
<dbReference type="GO" id="GO:0140078">
    <property type="term" value="F:class I DNA-(apurinic or apyrimidinic site) endonuclease activity"/>
    <property type="evidence" value="ECO:0007669"/>
    <property type="project" value="UniProtKB-EC"/>
</dbReference>
<dbReference type="GO" id="GO:0003684">
    <property type="term" value="F:damaged DNA binding"/>
    <property type="evidence" value="ECO:0007669"/>
    <property type="project" value="InterPro"/>
</dbReference>
<dbReference type="GO" id="GO:0008270">
    <property type="term" value="F:zinc ion binding"/>
    <property type="evidence" value="ECO:0007669"/>
    <property type="project" value="UniProtKB-UniRule"/>
</dbReference>
<dbReference type="GO" id="GO:0006284">
    <property type="term" value="P:base-excision repair"/>
    <property type="evidence" value="ECO:0007669"/>
    <property type="project" value="InterPro"/>
</dbReference>
<dbReference type="CDD" id="cd08966">
    <property type="entry name" value="EcFpg-like_N"/>
    <property type="match status" value="1"/>
</dbReference>
<dbReference type="FunFam" id="1.10.8.50:FF:000003">
    <property type="entry name" value="Formamidopyrimidine-DNA glycosylase"/>
    <property type="match status" value="1"/>
</dbReference>
<dbReference type="FunFam" id="3.20.190.10:FF:000001">
    <property type="entry name" value="Formamidopyrimidine-DNA glycosylase"/>
    <property type="match status" value="1"/>
</dbReference>
<dbReference type="Gene3D" id="1.10.8.50">
    <property type="match status" value="1"/>
</dbReference>
<dbReference type="Gene3D" id="3.20.190.10">
    <property type="entry name" value="MutM-like, N-terminal"/>
    <property type="match status" value="1"/>
</dbReference>
<dbReference type="HAMAP" id="MF_00103">
    <property type="entry name" value="Fapy_DNA_glycosyl"/>
    <property type="match status" value="1"/>
</dbReference>
<dbReference type="InterPro" id="IPR015886">
    <property type="entry name" value="DNA_glyclase/AP_lyase_DNA-bd"/>
</dbReference>
<dbReference type="InterPro" id="IPR015887">
    <property type="entry name" value="DNA_glyclase_Znf_dom_DNA_BS"/>
</dbReference>
<dbReference type="InterPro" id="IPR020629">
    <property type="entry name" value="Formamido-pyr_DNA_Glyclase"/>
</dbReference>
<dbReference type="InterPro" id="IPR012319">
    <property type="entry name" value="FPG_cat"/>
</dbReference>
<dbReference type="InterPro" id="IPR035937">
    <property type="entry name" value="MutM-like_N-ter"/>
</dbReference>
<dbReference type="InterPro" id="IPR010979">
    <property type="entry name" value="Ribosomal_uS13-like_H2TH"/>
</dbReference>
<dbReference type="InterPro" id="IPR000214">
    <property type="entry name" value="Znf_DNA_glyclase/AP_lyase"/>
</dbReference>
<dbReference type="InterPro" id="IPR010663">
    <property type="entry name" value="Znf_FPG/IleRS"/>
</dbReference>
<dbReference type="NCBIfam" id="TIGR00577">
    <property type="entry name" value="fpg"/>
    <property type="match status" value="1"/>
</dbReference>
<dbReference type="NCBIfam" id="NF002211">
    <property type="entry name" value="PRK01103.1"/>
    <property type="match status" value="1"/>
</dbReference>
<dbReference type="PANTHER" id="PTHR22993">
    <property type="entry name" value="FORMAMIDOPYRIMIDINE-DNA GLYCOSYLASE"/>
    <property type="match status" value="1"/>
</dbReference>
<dbReference type="PANTHER" id="PTHR22993:SF9">
    <property type="entry name" value="FORMAMIDOPYRIMIDINE-DNA GLYCOSYLASE"/>
    <property type="match status" value="1"/>
</dbReference>
<dbReference type="Pfam" id="PF01149">
    <property type="entry name" value="Fapy_DNA_glyco"/>
    <property type="match status" value="1"/>
</dbReference>
<dbReference type="Pfam" id="PF06831">
    <property type="entry name" value="H2TH"/>
    <property type="match status" value="1"/>
</dbReference>
<dbReference type="Pfam" id="PF06827">
    <property type="entry name" value="zf-FPG_IleRS"/>
    <property type="match status" value="1"/>
</dbReference>
<dbReference type="SMART" id="SM00898">
    <property type="entry name" value="Fapy_DNA_glyco"/>
    <property type="match status" value="1"/>
</dbReference>
<dbReference type="SMART" id="SM01232">
    <property type="entry name" value="H2TH"/>
    <property type="match status" value="1"/>
</dbReference>
<dbReference type="SUPFAM" id="SSF57716">
    <property type="entry name" value="Glucocorticoid receptor-like (DNA-binding domain)"/>
    <property type="match status" value="1"/>
</dbReference>
<dbReference type="SUPFAM" id="SSF81624">
    <property type="entry name" value="N-terminal domain of MutM-like DNA repair proteins"/>
    <property type="match status" value="1"/>
</dbReference>
<dbReference type="SUPFAM" id="SSF46946">
    <property type="entry name" value="S13-like H2TH domain"/>
    <property type="match status" value="1"/>
</dbReference>
<dbReference type="PROSITE" id="PS51068">
    <property type="entry name" value="FPG_CAT"/>
    <property type="match status" value="1"/>
</dbReference>
<dbReference type="PROSITE" id="PS01242">
    <property type="entry name" value="ZF_FPG_1"/>
    <property type="match status" value="1"/>
</dbReference>
<dbReference type="PROSITE" id="PS51066">
    <property type="entry name" value="ZF_FPG_2"/>
    <property type="match status" value="1"/>
</dbReference>
<evidence type="ECO:0000250" key="1"/>
<evidence type="ECO:0000255" key="2">
    <source>
        <dbReference type="HAMAP-Rule" id="MF_00103"/>
    </source>
</evidence>
<sequence length="275" mass="30223">MPELPEVETTRRGIEPALVGKRLCGVVVRQPQLRWPIPVKTLEKELVGQVIQQVARRAKYLLWRCPQGTLLVHLGMSGSLRIVPEHTPPAKHDHVDWVMEGGQMVRLHDPRRFGAVVWIPVTSPEEEHPLLAKLGPEPLHRSLNGRYLHQGSRGRQLAVKNYIMDQSVVVGVGNIYASEALFRAGIAPAQAAGKVGLGRYRALACAIKAVLGDSIEQGGTTLRDFIGSDGKPGYFVQSLNVYGRAGKACPKCGTTIEKQVLGQRSSYYCPQCQRA</sequence>